<feature type="signal peptide" evidence="2">
    <location>
        <begin position="1"/>
        <end position="22"/>
    </location>
</feature>
<feature type="chain" id="PRO_0000035186" description="Crotasin">
    <location>
        <begin position="23"/>
        <end position="63"/>
    </location>
</feature>
<feature type="disulfide bond" evidence="1">
    <location>
        <begin position="26"/>
        <end position="56"/>
    </location>
</feature>
<feature type="disulfide bond" evidence="1">
    <location>
        <begin position="33"/>
        <end position="50"/>
    </location>
</feature>
<feature type="disulfide bond" evidence="1">
    <location>
        <begin position="38"/>
        <end position="57"/>
    </location>
</feature>
<name>CTSP2_CRODU</name>
<protein>
    <recommendedName>
        <fullName>Crotasin</fullName>
    </recommendedName>
</protein>
<comment type="subcellular location">
    <subcellularLocation>
        <location>Secreted</location>
    </subcellularLocation>
</comment>
<comment type="tissue specificity">
    <text evidence="3">Highly expressed in pancreas, heart, liver, brain and kidney. Expressed to a low extent in the venom gland.</text>
</comment>
<gene>
    <name evidence="5" type="primary">Cts-p2</name>
</gene>
<keyword id="KW-1015">Disulfide bond</keyword>
<keyword id="KW-0964">Secreted</keyword>
<keyword id="KW-0732">Signal</keyword>
<organism>
    <name type="scientific">Crotalus durissus terrificus</name>
    <name type="common">South American rattlesnake</name>
    <dbReference type="NCBI Taxonomy" id="8732"/>
    <lineage>
        <taxon>Eukaryota</taxon>
        <taxon>Metazoa</taxon>
        <taxon>Chordata</taxon>
        <taxon>Craniata</taxon>
        <taxon>Vertebrata</taxon>
        <taxon>Euteleostomi</taxon>
        <taxon>Lepidosauria</taxon>
        <taxon>Squamata</taxon>
        <taxon>Bifurcata</taxon>
        <taxon>Unidentata</taxon>
        <taxon>Episquamata</taxon>
        <taxon>Toxicofera</taxon>
        <taxon>Serpentes</taxon>
        <taxon>Colubroidea</taxon>
        <taxon>Viperidae</taxon>
        <taxon>Crotalinae</taxon>
        <taxon>Crotalus</taxon>
    </lineage>
</organism>
<accession>Q6HAA2</accession>
<dbReference type="EMBL" id="AF250212">
    <property type="protein sequence ID" value="AAT47437.1"/>
    <property type="molecule type" value="Genomic_DNA"/>
</dbReference>
<dbReference type="GO" id="GO:0005576">
    <property type="term" value="C:extracellular region"/>
    <property type="evidence" value="ECO:0007669"/>
    <property type="project" value="UniProtKB-SubCell"/>
</dbReference>
<proteinExistence type="inferred from homology"/>
<evidence type="ECO:0000250" key="1">
    <source>
        <dbReference type="UniProtKB" id="P24333"/>
    </source>
</evidence>
<evidence type="ECO:0000255" key="2"/>
<evidence type="ECO:0000269" key="3">
    <source>
    </source>
</evidence>
<evidence type="ECO:0000305" key="4"/>
<evidence type="ECO:0000312" key="5">
    <source>
        <dbReference type="EMBL" id="AAT47437.1"/>
    </source>
</evidence>
<reference evidence="4 5" key="1">
    <citation type="journal article" date="2004" name="Toxicon">
        <title>Identification of crotasin, a crotamine-related gene of Crotalus durissus terrificus.</title>
        <authorList>
            <person name="Radis-Baptista G."/>
            <person name="Kubo T."/>
            <person name="Oguiura N."/>
            <person name="Prieto da Silva A.R.B."/>
            <person name="Hayashi M.A.F."/>
            <person name="Oliveira E.B."/>
            <person name="Yamane T."/>
        </authorList>
    </citation>
    <scope>NUCLEOTIDE SEQUENCE [GENOMIC DNA]</scope>
    <scope>TISSUE SPECIFICITY</scope>
    <source>
        <tissue evidence="5">Liver</tissue>
    </source>
</reference>
<sequence>MKILYLLSAFLFLAFLSESGNAQPQCRWLDGFCHSSPCPSGTTSIGQQDCLWYESCCIPRYEK</sequence>